<keyword id="KW-0413">Isomerase</keyword>
<keyword id="KW-0460">Magnesium</keyword>
<keyword id="KW-0479">Metal-binding</keyword>
<keyword id="KW-0597">Phosphoprotein</keyword>
<keyword id="KW-1185">Reference proteome</keyword>
<reference key="1">
    <citation type="journal article" date="2012" name="Stand. Genomic Sci.">
        <title>Complete genome sequence of Polynucleobacter necessarius subsp. asymbioticus type strain (QLW-P1DMWA-1(T)).</title>
        <authorList>
            <person name="Meincke L."/>
            <person name="Copeland A."/>
            <person name="Lapidus A."/>
            <person name="Lucas S."/>
            <person name="Berry K.W."/>
            <person name="Del Rio T.G."/>
            <person name="Hammon N."/>
            <person name="Dalin E."/>
            <person name="Tice H."/>
            <person name="Pitluck S."/>
            <person name="Richardson P."/>
            <person name="Bruce D."/>
            <person name="Goodwin L."/>
            <person name="Han C."/>
            <person name="Tapia R."/>
            <person name="Detter J.C."/>
            <person name="Schmutz J."/>
            <person name="Brettin T."/>
            <person name="Larimer F."/>
            <person name="Land M."/>
            <person name="Hauser L."/>
            <person name="Kyrpides N.C."/>
            <person name="Ivanova N."/>
            <person name="Goker M."/>
            <person name="Woyke T."/>
            <person name="Wu Q.L."/>
            <person name="Pockl M."/>
            <person name="Hahn M.W."/>
            <person name="Klenk H.P."/>
        </authorList>
    </citation>
    <scope>NUCLEOTIDE SEQUENCE [LARGE SCALE GENOMIC DNA]</scope>
    <source>
        <strain>DSM 18221 / CIP 109841 / QLW-P1DMWA-1</strain>
    </source>
</reference>
<dbReference type="EC" id="5.4.2.10" evidence="1"/>
<dbReference type="EMBL" id="CP000655">
    <property type="protein sequence ID" value="ABP34227.1"/>
    <property type="status" value="ALT_INIT"/>
    <property type="molecule type" value="Genomic_DNA"/>
</dbReference>
<dbReference type="RefSeq" id="WP_048812251.1">
    <property type="nucleotide sequence ID" value="NC_009379.1"/>
</dbReference>
<dbReference type="SMR" id="A4SXL3"/>
<dbReference type="GeneID" id="31481385"/>
<dbReference type="KEGG" id="pnu:Pnuc_1011"/>
<dbReference type="eggNOG" id="COG1109">
    <property type="taxonomic scope" value="Bacteria"/>
</dbReference>
<dbReference type="HOGENOM" id="CLU_016950_7_0_4"/>
<dbReference type="Proteomes" id="UP000000231">
    <property type="component" value="Chromosome"/>
</dbReference>
<dbReference type="GO" id="GO:0005829">
    <property type="term" value="C:cytosol"/>
    <property type="evidence" value="ECO:0007669"/>
    <property type="project" value="TreeGrafter"/>
</dbReference>
<dbReference type="GO" id="GO:0000287">
    <property type="term" value="F:magnesium ion binding"/>
    <property type="evidence" value="ECO:0007669"/>
    <property type="project" value="UniProtKB-UniRule"/>
</dbReference>
<dbReference type="GO" id="GO:0008966">
    <property type="term" value="F:phosphoglucosamine mutase activity"/>
    <property type="evidence" value="ECO:0007669"/>
    <property type="project" value="UniProtKB-UniRule"/>
</dbReference>
<dbReference type="GO" id="GO:0004615">
    <property type="term" value="F:phosphomannomutase activity"/>
    <property type="evidence" value="ECO:0007669"/>
    <property type="project" value="TreeGrafter"/>
</dbReference>
<dbReference type="GO" id="GO:0005975">
    <property type="term" value="P:carbohydrate metabolic process"/>
    <property type="evidence" value="ECO:0007669"/>
    <property type="project" value="InterPro"/>
</dbReference>
<dbReference type="GO" id="GO:0009252">
    <property type="term" value="P:peptidoglycan biosynthetic process"/>
    <property type="evidence" value="ECO:0007669"/>
    <property type="project" value="TreeGrafter"/>
</dbReference>
<dbReference type="GO" id="GO:0006048">
    <property type="term" value="P:UDP-N-acetylglucosamine biosynthetic process"/>
    <property type="evidence" value="ECO:0007669"/>
    <property type="project" value="TreeGrafter"/>
</dbReference>
<dbReference type="CDD" id="cd05802">
    <property type="entry name" value="GlmM"/>
    <property type="match status" value="1"/>
</dbReference>
<dbReference type="FunFam" id="3.30.310.50:FF:000001">
    <property type="entry name" value="Phosphoglucosamine mutase"/>
    <property type="match status" value="1"/>
</dbReference>
<dbReference type="FunFam" id="3.40.120.10:FF:000001">
    <property type="entry name" value="Phosphoglucosamine mutase"/>
    <property type="match status" value="1"/>
</dbReference>
<dbReference type="FunFam" id="3.40.120.10:FF:000003">
    <property type="entry name" value="Phosphoglucosamine mutase"/>
    <property type="match status" value="1"/>
</dbReference>
<dbReference type="Gene3D" id="3.40.120.10">
    <property type="entry name" value="Alpha-D-Glucose-1,6-Bisphosphate, subunit A, domain 3"/>
    <property type="match status" value="3"/>
</dbReference>
<dbReference type="Gene3D" id="3.30.310.50">
    <property type="entry name" value="Alpha-D-phosphohexomutase, C-terminal domain"/>
    <property type="match status" value="1"/>
</dbReference>
<dbReference type="HAMAP" id="MF_01554_B">
    <property type="entry name" value="GlmM_B"/>
    <property type="match status" value="1"/>
</dbReference>
<dbReference type="InterPro" id="IPR005844">
    <property type="entry name" value="A-D-PHexomutase_a/b/a-I"/>
</dbReference>
<dbReference type="InterPro" id="IPR016055">
    <property type="entry name" value="A-D-PHexomutase_a/b/a-I/II/III"/>
</dbReference>
<dbReference type="InterPro" id="IPR005845">
    <property type="entry name" value="A-D-PHexomutase_a/b/a-II"/>
</dbReference>
<dbReference type="InterPro" id="IPR005846">
    <property type="entry name" value="A-D-PHexomutase_a/b/a-III"/>
</dbReference>
<dbReference type="InterPro" id="IPR005843">
    <property type="entry name" value="A-D-PHexomutase_C"/>
</dbReference>
<dbReference type="InterPro" id="IPR036900">
    <property type="entry name" value="A-D-PHexomutase_C_sf"/>
</dbReference>
<dbReference type="InterPro" id="IPR016066">
    <property type="entry name" value="A-D-PHexomutase_CS"/>
</dbReference>
<dbReference type="InterPro" id="IPR005841">
    <property type="entry name" value="Alpha-D-phosphohexomutase_SF"/>
</dbReference>
<dbReference type="InterPro" id="IPR006352">
    <property type="entry name" value="GlmM_bact"/>
</dbReference>
<dbReference type="InterPro" id="IPR050060">
    <property type="entry name" value="Phosphoglucosamine_mutase"/>
</dbReference>
<dbReference type="NCBIfam" id="TIGR01455">
    <property type="entry name" value="glmM"/>
    <property type="match status" value="1"/>
</dbReference>
<dbReference type="NCBIfam" id="NF008139">
    <property type="entry name" value="PRK10887.1"/>
    <property type="match status" value="1"/>
</dbReference>
<dbReference type="PANTHER" id="PTHR42946:SF1">
    <property type="entry name" value="PHOSPHOGLUCOMUTASE (ALPHA-D-GLUCOSE-1,6-BISPHOSPHATE-DEPENDENT)"/>
    <property type="match status" value="1"/>
</dbReference>
<dbReference type="PANTHER" id="PTHR42946">
    <property type="entry name" value="PHOSPHOHEXOSE MUTASE"/>
    <property type="match status" value="1"/>
</dbReference>
<dbReference type="Pfam" id="PF02878">
    <property type="entry name" value="PGM_PMM_I"/>
    <property type="match status" value="1"/>
</dbReference>
<dbReference type="Pfam" id="PF02879">
    <property type="entry name" value="PGM_PMM_II"/>
    <property type="match status" value="1"/>
</dbReference>
<dbReference type="Pfam" id="PF02880">
    <property type="entry name" value="PGM_PMM_III"/>
    <property type="match status" value="1"/>
</dbReference>
<dbReference type="Pfam" id="PF00408">
    <property type="entry name" value="PGM_PMM_IV"/>
    <property type="match status" value="1"/>
</dbReference>
<dbReference type="PRINTS" id="PR00509">
    <property type="entry name" value="PGMPMM"/>
</dbReference>
<dbReference type="SUPFAM" id="SSF55957">
    <property type="entry name" value="Phosphoglucomutase, C-terminal domain"/>
    <property type="match status" value="1"/>
</dbReference>
<dbReference type="SUPFAM" id="SSF53738">
    <property type="entry name" value="Phosphoglucomutase, first 3 domains"/>
    <property type="match status" value="3"/>
</dbReference>
<dbReference type="PROSITE" id="PS00710">
    <property type="entry name" value="PGM_PMM"/>
    <property type="match status" value="1"/>
</dbReference>
<feature type="chain" id="PRO_0000343594" description="Phosphoglucosamine mutase">
    <location>
        <begin position="1"/>
        <end position="447"/>
    </location>
</feature>
<feature type="active site" description="Phosphoserine intermediate" evidence="1">
    <location>
        <position position="105"/>
    </location>
</feature>
<feature type="binding site" description="via phosphate group" evidence="1">
    <location>
        <position position="105"/>
    </location>
    <ligand>
        <name>Mg(2+)</name>
        <dbReference type="ChEBI" id="CHEBI:18420"/>
    </ligand>
</feature>
<feature type="binding site" evidence="1">
    <location>
        <position position="244"/>
    </location>
    <ligand>
        <name>Mg(2+)</name>
        <dbReference type="ChEBI" id="CHEBI:18420"/>
    </ligand>
</feature>
<feature type="binding site" evidence="1">
    <location>
        <position position="246"/>
    </location>
    <ligand>
        <name>Mg(2+)</name>
        <dbReference type="ChEBI" id="CHEBI:18420"/>
    </ligand>
</feature>
<feature type="binding site" evidence="1">
    <location>
        <position position="248"/>
    </location>
    <ligand>
        <name>Mg(2+)</name>
        <dbReference type="ChEBI" id="CHEBI:18420"/>
    </ligand>
</feature>
<feature type="modified residue" description="Phosphoserine" evidence="1">
    <location>
        <position position="105"/>
    </location>
</feature>
<organism>
    <name type="scientific">Polynucleobacter asymbioticus (strain DSM 18221 / CIP 109841 / QLW-P1DMWA-1)</name>
    <name type="common">Polynucleobacter necessarius subsp. asymbioticus</name>
    <dbReference type="NCBI Taxonomy" id="312153"/>
    <lineage>
        <taxon>Bacteria</taxon>
        <taxon>Pseudomonadati</taxon>
        <taxon>Pseudomonadota</taxon>
        <taxon>Betaproteobacteria</taxon>
        <taxon>Burkholderiales</taxon>
        <taxon>Burkholderiaceae</taxon>
        <taxon>Polynucleobacter</taxon>
    </lineage>
</organism>
<sequence>MKKQYFGTDGIRGEVGKFPIVPEFMTRLGYAAGKVLTKDAKPHERCKVLIGKDTRVSGYLLEAALEAGFAAAGVDVMLCGPIPTPGVAYLTKALRLSAGVVISASHNPYQDNGIKFFSAKGDKLSDDFELAIEAELENPIGCVSSKELGKAFRLDDAAGRYIEFCKSTFPGDLNLKGLKLVVDCANGAAYHTAPHVFHELGAEVISIGVSPDGRNINDGCGATAPAALIAKVKEEGADLGIALDGDADRLQMVDSTGRLFNGDELLYVLAKDRIDRGQQLGGVIGTLMTNLAIENAIKGLGIGFERANVGDRYVLELLKQKGWLIGGEGSGHLLCLDQHSTGDGTIAALQVLAAMSQNKKSLSELLNTVKIFPQVLLNVKLKPSYDWKSDEVLNKQITKVEADLKDAGRVLIRASGTEPLLRVMVETQSADVAMNAAKSIADLVPTP</sequence>
<protein>
    <recommendedName>
        <fullName evidence="1">Phosphoglucosamine mutase</fullName>
        <ecNumber evidence="1">5.4.2.10</ecNumber>
    </recommendedName>
</protein>
<proteinExistence type="inferred from homology"/>
<accession>A4SXL3</accession>
<gene>
    <name evidence="1" type="primary">glmM</name>
    <name type="ordered locus">Pnuc_1011</name>
</gene>
<evidence type="ECO:0000255" key="1">
    <source>
        <dbReference type="HAMAP-Rule" id="MF_01554"/>
    </source>
</evidence>
<evidence type="ECO:0000305" key="2"/>
<name>GLMM_POLAQ</name>
<comment type="function">
    <text evidence="1">Catalyzes the conversion of glucosamine-6-phosphate to glucosamine-1-phosphate.</text>
</comment>
<comment type="catalytic activity">
    <reaction evidence="1">
        <text>alpha-D-glucosamine 1-phosphate = D-glucosamine 6-phosphate</text>
        <dbReference type="Rhea" id="RHEA:23424"/>
        <dbReference type="ChEBI" id="CHEBI:58516"/>
        <dbReference type="ChEBI" id="CHEBI:58725"/>
        <dbReference type="EC" id="5.4.2.10"/>
    </reaction>
</comment>
<comment type="cofactor">
    <cofactor evidence="1">
        <name>Mg(2+)</name>
        <dbReference type="ChEBI" id="CHEBI:18420"/>
    </cofactor>
    <text evidence="1">Binds 1 Mg(2+) ion per subunit.</text>
</comment>
<comment type="PTM">
    <text evidence="1">Activated by phosphorylation.</text>
</comment>
<comment type="similarity">
    <text evidence="1">Belongs to the phosphohexose mutase family.</text>
</comment>
<comment type="sequence caution" evidence="2">
    <conflict type="erroneous initiation">
        <sequence resource="EMBL-CDS" id="ABP34227"/>
    </conflict>
</comment>